<proteinExistence type="inferred from homology"/>
<evidence type="ECO:0000250" key="1"/>
<evidence type="ECO:0000255" key="2">
    <source>
        <dbReference type="HAMAP-Rule" id="MF_00103"/>
    </source>
</evidence>
<protein>
    <recommendedName>
        <fullName evidence="2">Formamidopyrimidine-DNA glycosylase</fullName>
        <shortName evidence="2">Fapy-DNA glycosylase</shortName>
        <ecNumber evidence="2">3.2.2.23</ecNumber>
    </recommendedName>
    <alternativeName>
        <fullName evidence="2">DNA-(apurinic or apyrimidinic site) lyase MutM</fullName>
        <shortName evidence="2">AP lyase MutM</shortName>
        <ecNumber evidence="2">4.2.99.18</ecNumber>
    </alternativeName>
</protein>
<sequence length="271" mass="30685">MPELPEVEVISNFLLDKIKNKQISNVIVNNWNLRAPITKNIDDMLKGKVIRNIKRRGKYTIWNTDGSVAVIIHLGMSGKLIYADHDQMRNKHDHVVFLFSDNTSIIFNDPRRFGLVIVLNKEQETDFFSDFGIEPLTDEFSGDYLQELLKNKKVNIKSALMDNKSIVGVGNIYASESLFRARISPLRSAKNLTYRECEKLAAEIKNTLSDAIAAGGSTLKDYAQPSGSAGYFQNNFYVYGKVQKPCKICNNIITLIRQNGRSTYFCNACQN</sequence>
<accession>Q73G10</accession>
<gene>
    <name evidence="2" type="primary">mutM</name>
    <name evidence="2" type="synonym">fpg</name>
    <name type="ordered locus">WD_1158</name>
</gene>
<name>FPG_WOLPM</name>
<feature type="initiator methionine" description="Removed" evidence="1">
    <location>
        <position position="1"/>
    </location>
</feature>
<feature type="chain" id="PRO_0000228482" description="Formamidopyrimidine-DNA glycosylase">
    <location>
        <begin position="2"/>
        <end position="271"/>
    </location>
</feature>
<feature type="zinc finger region" description="FPG-type" evidence="2">
    <location>
        <begin position="237"/>
        <end position="271"/>
    </location>
</feature>
<feature type="active site" description="Schiff-base intermediate with DNA" evidence="2">
    <location>
        <position position="2"/>
    </location>
</feature>
<feature type="active site" description="Proton donor" evidence="2">
    <location>
        <position position="3"/>
    </location>
</feature>
<feature type="active site" description="Proton donor; for beta-elimination activity" evidence="2">
    <location>
        <position position="58"/>
    </location>
</feature>
<feature type="active site" description="Proton donor; for delta-elimination activity" evidence="2">
    <location>
        <position position="261"/>
    </location>
</feature>
<feature type="binding site" evidence="2">
    <location>
        <position position="92"/>
    </location>
    <ligand>
        <name>DNA</name>
        <dbReference type="ChEBI" id="CHEBI:16991"/>
    </ligand>
</feature>
<feature type="binding site" evidence="2">
    <location>
        <position position="111"/>
    </location>
    <ligand>
        <name>DNA</name>
        <dbReference type="ChEBI" id="CHEBI:16991"/>
    </ligand>
</feature>
<feature type="binding site" evidence="2">
    <location>
        <position position="152"/>
    </location>
    <ligand>
        <name>DNA</name>
        <dbReference type="ChEBI" id="CHEBI:16991"/>
    </ligand>
</feature>
<dbReference type="EC" id="3.2.2.23" evidence="2"/>
<dbReference type="EC" id="4.2.99.18" evidence="2"/>
<dbReference type="EMBL" id="AE017196">
    <property type="protein sequence ID" value="AAS14808.1"/>
    <property type="molecule type" value="Genomic_DNA"/>
</dbReference>
<dbReference type="RefSeq" id="WP_010963068.1">
    <property type="nucleotide sequence ID" value="NZ_OX384529.1"/>
</dbReference>
<dbReference type="SMR" id="Q73G10"/>
<dbReference type="EnsemblBacteria" id="AAS14808">
    <property type="protein sequence ID" value="AAS14808"/>
    <property type="gene ID" value="WD_1158"/>
</dbReference>
<dbReference type="GeneID" id="70036629"/>
<dbReference type="KEGG" id="wol:WD_1158"/>
<dbReference type="eggNOG" id="COG0266">
    <property type="taxonomic scope" value="Bacteria"/>
</dbReference>
<dbReference type="Proteomes" id="UP000008215">
    <property type="component" value="Chromosome"/>
</dbReference>
<dbReference type="GO" id="GO:0034039">
    <property type="term" value="F:8-oxo-7,8-dihydroguanine DNA N-glycosylase activity"/>
    <property type="evidence" value="ECO:0007669"/>
    <property type="project" value="TreeGrafter"/>
</dbReference>
<dbReference type="GO" id="GO:0140078">
    <property type="term" value="F:class I DNA-(apurinic or apyrimidinic site) endonuclease activity"/>
    <property type="evidence" value="ECO:0007669"/>
    <property type="project" value="UniProtKB-EC"/>
</dbReference>
<dbReference type="GO" id="GO:0003684">
    <property type="term" value="F:damaged DNA binding"/>
    <property type="evidence" value="ECO:0007669"/>
    <property type="project" value="InterPro"/>
</dbReference>
<dbReference type="GO" id="GO:0008270">
    <property type="term" value="F:zinc ion binding"/>
    <property type="evidence" value="ECO:0007669"/>
    <property type="project" value="UniProtKB-UniRule"/>
</dbReference>
<dbReference type="GO" id="GO:0006284">
    <property type="term" value="P:base-excision repair"/>
    <property type="evidence" value="ECO:0007669"/>
    <property type="project" value="InterPro"/>
</dbReference>
<dbReference type="CDD" id="cd08966">
    <property type="entry name" value="EcFpg-like_N"/>
    <property type="match status" value="1"/>
</dbReference>
<dbReference type="FunFam" id="1.10.8.50:FF:000003">
    <property type="entry name" value="Formamidopyrimidine-DNA glycosylase"/>
    <property type="match status" value="1"/>
</dbReference>
<dbReference type="Gene3D" id="1.10.8.50">
    <property type="match status" value="1"/>
</dbReference>
<dbReference type="Gene3D" id="3.20.190.10">
    <property type="entry name" value="MutM-like, N-terminal"/>
    <property type="match status" value="1"/>
</dbReference>
<dbReference type="HAMAP" id="MF_00103">
    <property type="entry name" value="Fapy_DNA_glycosyl"/>
    <property type="match status" value="1"/>
</dbReference>
<dbReference type="InterPro" id="IPR015886">
    <property type="entry name" value="DNA_glyclase/AP_lyase_DNA-bd"/>
</dbReference>
<dbReference type="InterPro" id="IPR015887">
    <property type="entry name" value="DNA_glyclase_Znf_dom_DNA_BS"/>
</dbReference>
<dbReference type="InterPro" id="IPR020629">
    <property type="entry name" value="Formamido-pyr_DNA_Glyclase"/>
</dbReference>
<dbReference type="InterPro" id="IPR012319">
    <property type="entry name" value="FPG_cat"/>
</dbReference>
<dbReference type="InterPro" id="IPR035937">
    <property type="entry name" value="MutM-like_N-ter"/>
</dbReference>
<dbReference type="InterPro" id="IPR010979">
    <property type="entry name" value="Ribosomal_uS13-like_H2TH"/>
</dbReference>
<dbReference type="InterPro" id="IPR000214">
    <property type="entry name" value="Znf_DNA_glyclase/AP_lyase"/>
</dbReference>
<dbReference type="InterPro" id="IPR010663">
    <property type="entry name" value="Znf_FPG/IleRS"/>
</dbReference>
<dbReference type="NCBIfam" id="TIGR00577">
    <property type="entry name" value="fpg"/>
    <property type="match status" value="1"/>
</dbReference>
<dbReference type="NCBIfam" id="NF002211">
    <property type="entry name" value="PRK01103.1"/>
    <property type="match status" value="1"/>
</dbReference>
<dbReference type="PANTHER" id="PTHR22993">
    <property type="entry name" value="FORMAMIDOPYRIMIDINE-DNA GLYCOSYLASE"/>
    <property type="match status" value="1"/>
</dbReference>
<dbReference type="PANTHER" id="PTHR22993:SF9">
    <property type="entry name" value="FORMAMIDOPYRIMIDINE-DNA GLYCOSYLASE"/>
    <property type="match status" value="1"/>
</dbReference>
<dbReference type="Pfam" id="PF01149">
    <property type="entry name" value="Fapy_DNA_glyco"/>
    <property type="match status" value="1"/>
</dbReference>
<dbReference type="Pfam" id="PF06831">
    <property type="entry name" value="H2TH"/>
    <property type="match status" value="1"/>
</dbReference>
<dbReference type="Pfam" id="PF06827">
    <property type="entry name" value="zf-FPG_IleRS"/>
    <property type="match status" value="1"/>
</dbReference>
<dbReference type="SMART" id="SM00898">
    <property type="entry name" value="Fapy_DNA_glyco"/>
    <property type="match status" value="1"/>
</dbReference>
<dbReference type="SMART" id="SM01232">
    <property type="entry name" value="H2TH"/>
    <property type="match status" value="1"/>
</dbReference>
<dbReference type="SUPFAM" id="SSF57716">
    <property type="entry name" value="Glucocorticoid receptor-like (DNA-binding domain)"/>
    <property type="match status" value="1"/>
</dbReference>
<dbReference type="SUPFAM" id="SSF81624">
    <property type="entry name" value="N-terminal domain of MutM-like DNA repair proteins"/>
    <property type="match status" value="1"/>
</dbReference>
<dbReference type="SUPFAM" id="SSF46946">
    <property type="entry name" value="S13-like H2TH domain"/>
    <property type="match status" value="1"/>
</dbReference>
<dbReference type="PROSITE" id="PS51068">
    <property type="entry name" value="FPG_CAT"/>
    <property type="match status" value="1"/>
</dbReference>
<dbReference type="PROSITE" id="PS01242">
    <property type="entry name" value="ZF_FPG_1"/>
    <property type="match status" value="1"/>
</dbReference>
<dbReference type="PROSITE" id="PS51066">
    <property type="entry name" value="ZF_FPG_2"/>
    <property type="match status" value="1"/>
</dbReference>
<reference key="1">
    <citation type="journal article" date="2004" name="PLoS Biol.">
        <title>Phylogenomics of the reproductive parasite Wolbachia pipientis wMel: a streamlined genome overrun by mobile genetic elements.</title>
        <authorList>
            <person name="Wu M."/>
            <person name="Sun L.V."/>
            <person name="Vamathevan J.J."/>
            <person name="Riegler M."/>
            <person name="DeBoy R.T."/>
            <person name="Brownlie J.C."/>
            <person name="McGraw E.A."/>
            <person name="Martin W."/>
            <person name="Esser C."/>
            <person name="Ahmadinejad N."/>
            <person name="Wiegand C."/>
            <person name="Madupu R."/>
            <person name="Beanan M.J."/>
            <person name="Brinkac L.M."/>
            <person name="Daugherty S.C."/>
            <person name="Durkin A.S."/>
            <person name="Kolonay J.F."/>
            <person name="Nelson W.C."/>
            <person name="Mohamoud Y."/>
            <person name="Lee P."/>
            <person name="Berry K.J."/>
            <person name="Young M.B."/>
            <person name="Utterback T.R."/>
            <person name="Weidman J.F."/>
            <person name="Nierman W.C."/>
            <person name="Paulsen I.T."/>
            <person name="Nelson K.E."/>
            <person name="Tettelin H."/>
            <person name="O'Neill S.L."/>
            <person name="Eisen J.A."/>
        </authorList>
    </citation>
    <scope>NUCLEOTIDE SEQUENCE [LARGE SCALE GENOMIC DNA]</scope>
</reference>
<keyword id="KW-0227">DNA damage</keyword>
<keyword id="KW-0234">DNA repair</keyword>
<keyword id="KW-0238">DNA-binding</keyword>
<keyword id="KW-0326">Glycosidase</keyword>
<keyword id="KW-0378">Hydrolase</keyword>
<keyword id="KW-0456">Lyase</keyword>
<keyword id="KW-0479">Metal-binding</keyword>
<keyword id="KW-0511">Multifunctional enzyme</keyword>
<keyword id="KW-0862">Zinc</keyword>
<keyword id="KW-0863">Zinc-finger</keyword>
<comment type="function">
    <text evidence="2">Involved in base excision repair of DNA damaged by oxidation or by mutagenic agents. Acts as a DNA glycosylase that recognizes and removes damaged bases. Has a preference for oxidized purines, such as 7,8-dihydro-8-oxoguanine (8-oxoG). Has AP (apurinic/apyrimidinic) lyase activity and introduces nicks in the DNA strand. Cleaves the DNA backbone by beta-delta elimination to generate a single-strand break at the site of the removed base with both 3'- and 5'-phosphates.</text>
</comment>
<comment type="catalytic activity">
    <reaction evidence="2">
        <text>Hydrolysis of DNA containing ring-opened 7-methylguanine residues, releasing 2,6-diamino-4-hydroxy-5-(N-methyl)formamidopyrimidine.</text>
        <dbReference type="EC" id="3.2.2.23"/>
    </reaction>
</comment>
<comment type="catalytic activity">
    <reaction evidence="2">
        <text>2'-deoxyribonucleotide-(2'-deoxyribose 5'-phosphate)-2'-deoxyribonucleotide-DNA = a 3'-end 2'-deoxyribonucleotide-(2,3-dehydro-2,3-deoxyribose 5'-phosphate)-DNA + a 5'-end 5'-phospho-2'-deoxyribonucleoside-DNA + H(+)</text>
        <dbReference type="Rhea" id="RHEA:66592"/>
        <dbReference type="Rhea" id="RHEA-COMP:13180"/>
        <dbReference type="Rhea" id="RHEA-COMP:16897"/>
        <dbReference type="Rhea" id="RHEA-COMP:17067"/>
        <dbReference type="ChEBI" id="CHEBI:15378"/>
        <dbReference type="ChEBI" id="CHEBI:136412"/>
        <dbReference type="ChEBI" id="CHEBI:157695"/>
        <dbReference type="ChEBI" id="CHEBI:167181"/>
        <dbReference type="EC" id="4.2.99.18"/>
    </reaction>
</comment>
<comment type="cofactor">
    <cofactor evidence="2">
        <name>Zn(2+)</name>
        <dbReference type="ChEBI" id="CHEBI:29105"/>
    </cofactor>
    <text evidence="2">Binds 1 zinc ion per subunit.</text>
</comment>
<comment type="subunit">
    <text evidence="2">Monomer.</text>
</comment>
<comment type="similarity">
    <text evidence="2">Belongs to the FPG family.</text>
</comment>
<organism>
    <name type="scientific">Wolbachia pipientis wMel</name>
    <dbReference type="NCBI Taxonomy" id="163164"/>
    <lineage>
        <taxon>Bacteria</taxon>
        <taxon>Pseudomonadati</taxon>
        <taxon>Pseudomonadota</taxon>
        <taxon>Alphaproteobacteria</taxon>
        <taxon>Rickettsiales</taxon>
        <taxon>Anaplasmataceae</taxon>
        <taxon>Wolbachieae</taxon>
        <taxon>Wolbachia</taxon>
    </lineage>
</organism>